<evidence type="ECO:0000250" key="1">
    <source>
        <dbReference type="UniProtKB" id="O35286"/>
    </source>
</evidence>
<evidence type="ECO:0000255" key="2">
    <source>
        <dbReference type="PROSITE-ProRule" id="PRU00541"/>
    </source>
</evidence>
<evidence type="ECO:0000255" key="3">
    <source>
        <dbReference type="PROSITE-ProRule" id="PRU00542"/>
    </source>
</evidence>
<evidence type="ECO:0000256" key="4">
    <source>
        <dbReference type="SAM" id="MobiDB-lite"/>
    </source>
</evidence>
<evidence type="ECO:0000269" key="5">
    <source>
    </source>
</evidence>
<evidence type="ECO:0000269" key="6">
    <source>
    </source>
</evidence>
<evidence type="ECO:0000269" key="7">
    <source>
    </source>
</evidence>
<evidence type="ECO:0000269" key="8">
    <source>
    </source>
</evidence>
<evidence type="ECO:0000269" key="9">
    <source>
    </source>
</evidence>
<evidence type="ECO:0000269" key="10">
    <source>
    </source>
</evidence>
<evidence type="ECO:0000269" key="11">
    <source>
    </source>
</evidence>
<evidence type="ECO:0000269" key="12">
    <source>
    </source>
</evidence>
<evidence type="ECO:0000269" key="13">
    <source>
    </source>
</evidence>
<evidence type="ECO:0000269" key="14">
    <source>
    </source>
</evidence>
<evidence type="ECO:0000303" key="15">
    <source>
    </source>
</evidence>
<evidence type="ECO:0000303" key="16">
    <source>
    </source>
</evidence>
<evidence type="ECO:0000303" key="17">
    <source>
    </source>
</evidence>
<evidence type="ECO:0000305" key="18"/>
<evidence type="ECO:0000312" key="19">
    <source>
        <dbReference type="HGNC" id="HGNC:2738"/>
    </source>
</evidence>
<evidence type="ECO:0007744" key="20">
    <source>
        <dbReference type="PDB" id="5XDR"/>
    </source>
</evidence>
<evidence type="ECO:0007744" key="21">
    <source>
        <dbReference type="PDB" id="6ID1"/>
    </source>
</evidence>
<evidence type="ECO:0007744" key="22">
    <source>
        <dbReference type="PDB" id="6SH6"/>
    </source>
</evidence>
<evidence type="ECO:0007744" key="23">
    <source>
        <dbReference type="PDB" id="6SH7"/>
    </source>
</evidence>
<evidence type="ECO:0007744" key="24">
    <source>
    </source>
</evidence>
<evidence type="ECO:0007744" key="25">
    <source>
    </source>
</evidence>
<evidence type="ECO:0007744" key="26">
    <source>
    </source>
</evidence>
<evidence type="ECO:0007829" key="27">
    <source>
        <dbReference type="PDB" id="5XDR"/>
    </source>
</evidence>
<evidence type="ECO:0007829" key="28">
    <source>
        <dbReference type="PDB" id="6SH6"/>
    </source>
</evidence>
<evidence type="ECO:0007829" key="29">
    <source>
        <dbReference type="PDB" id="8EJM"/>
    </source>
</evidence>
<accession>O43143</accession>
<accession>Q9NQT7</accession>
<dbReference type="EC" id="3.6.4.13" evidence="8 12"/>
<dbReference type="EMBL" id="AB001636">
    <property type="protein sequence ID" value="BAA23987.1"/>
    <property type="molecule type" value="mRNA"/>
</dbReference>
<dbReference type="EMBL" id="AF279891">
    <property type="protein sequence ID" value="AAF90182.1"/>
    <property type="molecule type" value="mRNA"/>
</dbReference>
<dbReference type="EMBL" id="BC035974">
    <property type="protein sequence ID" value="AAH35974.1"/>
    <property type="molecule type" value="mRNA"/>
</dbReference>
<dbReference type="CCDS" id="CCDS33966.1"/>
<dbReference type="PIR" id="JC5785">
    <property type="entry name" value="JC5785"/>
</dbReference>
<dbReference type="RefSeq" id="NP_001349.2">
    <property type="nucleotide sequence ID" value="NM_001358.3"/>
</dbReference>
<dbReference type="PDB" id="5XDR">
    <property type="method" value="X-ray"/>
    <property type="resolution" value="2.00 A"/>
    <property type="chains" value="A=110-795"/>
</dbReference>
<dbReference type="PDB" id="6ID1">
    <property type="method" value="EM"/>
    <property type="resolution" value="2.86 A"/>
    <property type="chains" value="V=1-795"/>
</dbReference>
<dbReference type="PDB" id="6SH6">
    <property type="method" value="X-ray"/>
    <property type="resolution" value="1.85 A"/>
    <property type="chains" value="A=113-795"/>
</dbReference>
<dbReference type="PDB" id="6SH7">
    <property type="method" value="X-ray"/>
    <property type="resolution" value="2.21 A"/>
    <property type="chains" value="A=113-795"/>
</dbReference>
<dbReference type="PDB" id="8EJM">
    <property type="method" value="X-ray"/>
    <property type="resolution" value="1.80 A"/>
    <property type="chains" value="A=113-795"/>
</dbReference>
<dbReference type="PDB" id="8RO2">
    <property type="method" value="EM"/>
    <property type="resolution" value="3.50 A"/>
    <property type="chains" value="DX=1-795"/>
</dbReference>
<dbReference type="PDBsum" id="5XDR"/>
<dbReference type="PDBsum" id="6ID1"/>
<dbReference type="PDBsum" id="6SH6"/>
<dbReference type="PDBsum" id="6SH7"/>
<dbReference type="PDBsum" id="8EJM"/>
<dbReference type="PDBsum" id="8RO2"/>
<dbReference type="EMDB" id="EMD-19399"/>
<dbReference type="EMDB" id="EMD-9647"/>
<dbReference type="SMR" id="O43143"/>
<dbReference type="BioGRID" id="108029">
    <property type="interactions" value="504"/>
</dbReference>
<dbReference type="CORUM" id="O43143"/>
<dbReference type="DIP" id="DIP-38211N"/>
<dbReference type="FunCoup" id="O43143">
    <property type="interactions" value="4531"/>
</dbReference>
<dbReference type="IntAct" id="O43143">
    <property type="interactions" value="148"/>
</dbReference>
<dbReference type="MINT" id="O43143"/>
<dbReference type="STRING" id="9606.ENSP00000336741"/>
<dbReference type="BindingDB" id="O43143"/>
<dbReference type="ChEMBL" id="CHEMBL4295661"/>
<dbReference type="GlyCosmos" id="O43143">
    <property type="glycosylation" value="3 sites, 1 glycan"/>
</dbReference>
<dbReference type="GlyGen" id="O43143">
    <property type="glycosylation" value="4 sites, 1 O-linked glycan (4 sites)"/>
</dbReference>
<dbReference type="iPTMnet" id="O43143"/>
<dbReference type="MetOSite" id="O43143"/>
<dbReference type="PhosphoSitePlus" id="O43143"/>
<dbReference type="SwissPalm" id="O43143"/>
<dbReference type="BioMuta" id="DHX15"/>
<dbReference type="jPOST" id="O43143"/>
<dbReference type="MassIVE" id="O43143"/>
<dbReference type="PaxDb" id="9606-ENSP00000336741"/>
<dbReference type="PeptideAtlas" id="O43143"/>
<dbReference type="ProteomicsDB" id="48760"/>
<dbReference type="Pumba" id="O43143"/>
<dbReference type="Antibodypedia" id="10152">
    <property type="antibodies" value="177 antibodies from 21 providers"/>
</dbReference>
<dbReference type="DNASU" id="1665"/>
<dbReference type="Ensembl" id="ENST00000336812.5">
    <property type="protein sequence ID" value="ENSP00000336741.4"/>
    <property type="gene ID" value="ENSG00000109606.13"/>
</dbReference>
<dbReference type="GeneID" id="1665"/>
<dbReference type="KEGG" id="hsa:1665"/>
<dbReference type="MANE-Select" id="ENST00000336812.5">
    <property type="protein sequence ID" value="ENSP00000336741.4"/>
    <property type="RefSeq nucleotide sequence ID" value="NM_001358.3"/>
    <property type="RefSeq protein sequence ID" value="NP_001349.2"/>
</dbReference>
<dbReference type="UCSC" id="uc003gqx.4">
    <property type="organism name" value="human"/>
</dbReference>
<dbReference type="AGR" id="HGNC:2738"/>
<dbReference type="CTD" id="1665"/>
<dbReference type="DisGeNET" id="1665"/>
<dbReference type="GeneCards" id="DHX15"/>
<dbReference type="HGNC" id="HGNC:2738">
    <property type="gene designation" value="DHX15"/>
</dbReference>
<dbReference type="HPA" id="ENSG00000109606">
    <property type="expression patterns" value="Low tissue specificity"/>
</dbReference>
<dbReference type="MalaCards" id="DHX15"/>
<dbReference type="MIM" id="603403">
    <property type="type" value="gene"/>
</dbReference>
<dbReference type="neXtProt" id="NX_O43143"/>
<dbReference type="OpenTargets" id="ENSG00000109606"/>
<dbReference type="PharmGKB" id="PA27204"/>
<dbReference type="VEuPathDB" id="HostDB:ENSG00000109606"/>
<dbReference type="eggNOG" id="KOG0925">
    <property type="taxonomic scope" value="Eukaryota"/>
</dbReference>
<dbReference type="GeneTree" id="ENSGT00940000155800"/>
<dbReference type="HOGENOM" id="CLU_001832_5_11_1"/>
<dbReference type="InParanoid" id="O43143"/>
<dbReference type="OMA" id="MKVYPLY"/>
<dbReference type="OrthoDB" id="10253254at2759"/>
<dbReference type="PAN-GO" id="O43143">
    <property type="GO annotations" value="3 GO annotations based on evolutionary models"/>
</dbReference>
<dbReference type="PhylomeDB" id="O43143"/>
<dbReference type="TreeFam" id="TF105735"/>
<dbReference type="PathwayCommons" id="O43143"/>
<dbReference type="Reactome" id="R-HSA-72163">
    <property type="pathway name" value="mRNA Splicing - Major Pathway"/>
</dbReference>
<dbReference type="SignaLink" id="O43143"/>
<dbReference type="BioGRID-ORCS" id="1665">
    <property type="hits" value="840 hits in 1166 CRISPR screens"/>
</dbReference>
<dbReference type="CD-CODE" id="232F8A39">
    <property type="entry name" value="P-body"/>
</dbReference>
<dbReference type="CD-CODE" id="91857CE7">
    <property type="entry name" value="Nucleolus"/>
</dbReference>
<dbReference type="ChiTaRS" id="DHX15">
    <property type="organism name" value="human"/>
</dbReference>
<dbReference type="GeneWiki" id="DHX15"/>
<dbReference type="GenomeRNAi" id="1665"/>
<dbReference type="Pharos" id="O43143">
    <property type="development level" value="Tbio"/>
</dbReference>
<dbReference type="PRO" id="PR:O43143"/>
<dbReference type="Proteomes" id="UP000005640">
    <property type="component" value="Chromosome 4"/>
</dbReference>
<dbReference type="RNAct" id="O43143">
    <property type="molecule type" value="protein"/>
</dbReference>
<dbReference type="Bgee" id="ENSG00000109606">
    <property type="expression patterns" value="Expressed in cartilage tissue and 203 other cell types or tissues"/>
</dbReference>
<dbReference type="GO" id="GO:0016607">
    <property type="term" value="C:nuclear speck"/>
    <property type="evidence" value="ECO:0000314"/>
    <property type="project" value="HPA"/>
</dbReference>
<dbReference type="GO" id="GO:0005730">
    <property type="term" value="C:nucleolus"/>
    <property type="evidence" value="ECO:0007669"/>
    <property type="project" value="UniProtKB-SubCell"/>
</dbReference>
<dbReference type="GO" id="GO:0005654">
    <property type="term" value="C:nucleoplasm"/>
    <property type="evidence" value="ECO:0000304"/>
    <property type="project" value="Reactome"/>
</dbReference>
<dbReference type="GO" id="GO:0005634">
    <property type="term" value="C:nucleus"/>
    <property type="evidence" value="ECO:0000304"/>
    <property type="project" value="ProtInc"/>
</dbReference>
<dbReference type="GO" id="GO:0005681">
    <property type="term" value="C:spliceosomal complex"/>
    <property type="evidence" value="ECO:0000318"/>
    <property type="project" value="GO_Central"/>
</dbReference>
<dbReference type="GO" id="GO:0005689">
    <property type="term" value="C:U12-type spliceosomal complex"/>
    <property type="evidence" value="ECO:0000314"/>
    <property type="project" value="HGNC-UCL"/>
</dbReference>
<dbReference type="GO" id="GO:0005524">
    <property type="term" value="F:ATP binding"/>
    <property type="evidence" value="ECO:0007669"/>
    <property type="project" value="UniProtKB-KW"/>
</dbReference>
<dbReference type="GO" id="GO:0016887">
    <property type="term" value="F:ATP hydrolysis activity"/>
    <property type="evidence" value="ECO:0007669"/>
    <property type="project" value="RHEA"/>
</dbReference>
<dbReference type="GO" id="GO:0008186">
    <property type="term" value="F:ATP-dependent activity, acting on RNA"/>
    <property type="evidence" value="ECO:0000304"/>
    <property type="project" value="Reactome"/>
</dbReference>
<dbReference type="GO" id="GO:0003725">
    <property type="term" value="F:double-stranded RNA binding"/>
    <property type="evidence" value="ECO:0000314"/>
    <property type="project" value="UniProtKB"/>
</dbReference>
<dbReference type="GO" id="GO:0004386">
    <property type="term" value="F:helicase activity"/>
    <property type="evidence" value="ECO:0000318"/>
    <property type="project" value="GO_Central"/>
</dbReference>
<dbReference type="GO" id="GO:0003723">
    <property type="term" value="F:RNA binding"/>
    <property type="evidence" value="ECO:0000314"/>
    <property type="project" value="UniProtKB"/>
</dbReference>
<dbReference type="GO" id="GO:0003724">
    <property type="term" value="F:RNA helicase activity"/>
    <property type="evidence" value="ECO:0000314"/>
    <property type="project" value="UniProtKB"/>
</dbReference>
<dbReference type="GO" id="GO:0140374">
    <property type="term" value="P:antiviral innate immune response"/>
    <property type="evidence" value="ECO:0000314"/>
    <property type="project" value="UniProtKB"/>
</dbReference>
<dbReference type="GO" id="GO:0042742">
    <property type="term" value="P:defense response to bacterium"/>
    <property type="evidence" value="ECO:0007669"/>
    <property type="project" value="Ensembl"/>
</dbReference>
<dbReference type="GO" id="GO:0051607">
    <property type="term" value="P:defense response to virus"/>
    <property type="evidence" value="ECO:0000314"/>
    <property type="project" value="UniProtKB"/>
</dbReference>
<dbReference type="GO" id="GO:0006397">
    <property type="term" value="P:mRNA processing"/>
    <property type="evidence" value="ECO:0000304"/>
    <property type="project" value="ProtInc"/>
</dbReference>
<dbReference type="GO" id="GO:0000398">
    <property type="term" value="P:mRNA splicing, via spliceosome"/>
    <property type="evidence" value="ECO:0000304"/>
    <property type="project" value="Reactome"/>
</dbReference>
<dbReference type="GO" id="GO:0043123">
    <property type="term" value="P:positive regulation of canonical NF-kappaB signal transduction"/>
    <property type="evidence" value="ECO:0000314"/>
    <property type="project" value="UniProtKB"/>
</dbReference>
<dbReference type="GO" id="GO:0043279">
    <property type="term" value="P:response to alkaloid"/>
    <property type="evidence" value="ECO:0007669"/>
    <property type="project" value="Ensembl"/>
</dbReference>
<dbReference type="GO" id="GO:0009636">
    <property type="term" value="P:response to toxic substance"/>
    <property type="evidence" value="ECO:0007669"/>
    <property type="project" value="Ensembl"/>
</dbReference>
<dbReference type="GO" id="GO:0008380">
    <property type="term" value="P:RNA splicing"/>
    <property type="evidence" value="ECO:0000305"/>
    <property type="project" value="HGNC-UCL"/>
</dbReference>
<dbReference type="CDD" id="cd17973">
    <property type="entry name" value="DEXHc_DHX15"/>
    <property type="match status" value="1"/>
</dbReference>
<dbReference type="CDD" id="cd18791">
    <property type="entry name" value="SF2_C_RHA"/>
    <property type="match status" value="1"/>
</dbReference>
<dbReference type="FunFam" id="3.40.50.300:FF:000007">
    <property type="entry name" value="Pre-mRNA-splicing factor ATP-dependent RNA helicase"/>
    <property type="match status" value="1"/>
</dbReference>
<dbReference type="FunFam" id="3.40.50.300:FF:000324">
    <property type="entry name" value="pre-mRNA-splicing factor ATP-dependent RNA helicase DHX15"/>
    <property type="match status" value="1"/>
</dbReference>
<dbReference type="FunFam" id="1.20.120.1080:FF:000003">
    <property type="entry name" value="Pre-mRNA-splicing factor ATP-dependent RNA helicase PRP43"/>
    <property type="match status" value="1"/>
</dbReference>
<dbReference type="Gene3D" id="1.20.120.1080">
    <property type="match status" value="1"/>
</dbReference>
<dbReference type="Gene3D" id="3.40.50.300">
    <property type="entry name" value="P-loop containing nucleotide triphosphate hydrolases"/>
    <property type="match status" value="2"/>
</dbReference>
<dbReference type="InterPro" id="IPR011709">
    <property type="entry name" value="DEAD-box_helicase_OB_fold"/>
</dbReference>
<dbReference type="InterPro" id="IPR011545">
    <property type="entry name" value="DEAD/DEAH_box_helicase_dom"/>
</dbReference>
<dbReference type="InterPro" id="IPR044756">
    <property type="entry name" value="DHX15_DEXHc"/>
</dbReference>
<dbReference type="InterPro" id="IPR002464">
    <property type="entry name" value="DNA/RNA_helicase_DEAH_CS"/>
</dbReference>
<dbReference type="InterPro" id="IPR048333">
    <property type="entry name" value="HA2_WH"/>
</dbReference>
<dbReference type="InterPro" id="IPR007502">
    <property type="entry name" value="Helicase-assoc_dom"/>
</dbReference>
<dbReference type="InterPro" id="IPR014001">
    <property type="entry name" value="Helicase_ATP-bd"/>
</dbReference>
<dbReference type="InterPro" id="IPR001650">
    <property type="entry name" value="Helicase_C-like"/>
</dbReference>
<dbReference type="InterPro" id="IPR027417">
    <property type="entry name" value="P-loop_NTPase"/>
</dbReference>
<dbReference type="PANTHER" id="PTHR18934">
    <property type="entry name" value="ATP-DEPENDENT RNA HELICASE"/>
    <property type="match status" value="1"/>
</dbReference>
<dbReference type="PANTHER" id="PTHR18934:SF95">
    <property type="entry name" value="ATP-DEPENDENT RNA HELICASE DHX15"/>
    <property type="match status" value="1"/>
</dbReference>
<dbReference type="Pfam" id="PF00270">
    <property type="entry name" value="DEAD"/>
    <property type="match status" value="1"/>
</dbReference>
<dbReference type="Pfam" id="PF21010">
    <property type="entry name" value="HA2_C"/>
    <property type="match status" value="1"/>
</dbReference>
<dbReference type="Pfam" id="PF04408">
    <property type="entry name" value="HA2_N"/>
    <property type="match status" value="1"/>
</dbReference>
<dbReference type="Pfam" id="PF00271">
    <property type="entry name" value="Helicase_C"/>
    <property type="match status" value="1"/>
</dbReference>
<dbReference type="Pfam" id="PF07717">
    <property type="entry name" value="OB_NTP_bind"/>
    <property type="match status" value="1"/>
</dbReference>
<dbReference type="SMART" id="SM00487">
    <property type="entry name" value="DEXDc"/>
    <property type="match status" value="1"/>
</dbReference>
<dbReference type="SMART" id="SM00847">
    <property type="entry name" value="HA2"/>
    <property type="match status" value="1"/>
</dbReference>
<dbReference type="SMART" id="SM00490">
    <property type="entry name" value="HELICc"/>
    <property type="match status" value="1"/>
</dbReference>
<dbReference type="SUPFAM" id="SSF52540">
    <property type="entry name" value="P-loop containing nucleoside triphosphate hydrolases"/>
    <property type="match status" value="1"/>
</dbReference>
<dbReference type="PROSITE" id="PS00690">
    <property type="entry name" value="DEAH_ATP_HELICASE"/>
    <property type="match status" value="1"/>
</dbReference>
<dbReference type="PROSITE" id="PS51192">
    <property type="entry name" value="HELICASE_ATP_BIND_1"/>
    <property type="match status" value="1"/>
</dbReference>
<dbReference type="PROSITE" id="PS51194">
    <property type="entry name" value="HELICASE_CTER"/>
    <property type="match status" value="1"/>
</dbReference>
<comment type="function">
    <text evidence="1 7 8 9 10 12 13">RNA helicase involved in mRNA processing and antiviral innate immunity (PubMed:19103666, PubMed:19432882, PubMed:24782566, PubMed:24990078, PubMed:32179686, PubMed:34161762). Pre-mRNA processing factor involved in disassembly of spliceosomes after the release of mature mRNA (PubMed:19103666). In cooperation with TFIP11 seem to be involved in the transition of the U2, U5 and U6 snRNP-containing IL complex to the snRNP-free IS complex leading to efficient debranching and turnover of excised introns (PubMed:19103666). Plays a key role in antiviral innate immunity by promoting both MAVS-dependent signaling and NLRP6 inflammasome (PubMed:24782566, PubMed:24990078, PubMed:34161762). Acts as an RNA virus sensor: recognizes and binds viral double stranded RNA (dsRNA) and activates the MAVS-dependent signaling to produce interferon-beta and interferon lambda-3 (IFNL3) (PubMed:24782566, PubMed:24990078, PubMed:34161762). Involved in intestinal antiviral innate immunity together with NLRP6: recognizes and binds viral dsRNA and promotes activation of the NLRP6 inflammasome in intestinal epithelial cells to restrict infection by enteric viruses (PubMed:34161762). The NLRP6 inflammasome acts by promoting maturation and secretion of IL18 in the extracellular milieu (PubMed:34161762). Also involved in antibacterial innate immunity by promoting Wnt-induced antimicrobial protein expression in Paneth cells (By similarity).</text>
</comment>
<comment type="catalytic activity">
    <reaction evidence="8 12">
        <text>ATP + H2O = ADP + phosphate + H(+)</text>
        <dbReference type="Rhea" id="RHEA:13065"/>
        <dbReference type="ChEBI" id="CHEBI:15377"/>
        <dbReference type="ChEBI" id="CHEBI:15378"/>
        <dbReference type="ChEBI" id="CHEBI:30616"/>
        <dbReference type="ChEBI" id="CHEBI:43474"/>
        <dbReference type="ChEBI" id="CHEBI:456216"/>
        <dbReference type="EC" id="3.6.4.13"/>
    </reaction>
</comment>
<comment type="activity regulation">
    <text evidence="12">ATPase activity is enhanced upon binding to G-patch domain-containing proteins (PubMed:32179686). G-patch domain-containing proteins act like a brace that tethers mobile sections of DHX15 together, stabilizing a functional conformation with high RNA affinity, thereby promoting the ATPase activity (PubMed:32179686).</text>
</comment>
<comment type="subunit">
    <text evidence="5 6 7 8 11 12 13">Component of the U11/U12 snRNPs that are part of the U12-type spliceosome (PubMed:15146077). Identified in the Intron Large spliceosome complex (IL, also named intron lariat spliceosome), a post-mRNA release spliceosomal complex containing the excised intron, U2, U5 and U6 snRNPs, and splicing factors; the association may be transient (PubMed:19103666, PubMed:30728453). The IL complex exists in two distinct conformations, one with the DHX15 (ILS2) and one without (ILS1) (PubMed:30728453). Interacts with TFIP11 (via G-patch domain); indicative for a recruitment to the IL complex (PubMed:19103666). Interacts with SSB/La (PubMed:12458796). Interacts with GPATCH2 (via G-patch domain); promoting the RNA helicase activity (PubMed:19432882). Interacts with NKRF (via G-patch domain); promoting the RNA helicase activity (PubMed:32179686). Interacts with NLRP6 (PubMed:34161762).</text>
</comment>
<comment type="interaction">
    <interactant intactId="EBI-1237044">
        <id>O43143</id>
    </interactant>
    <interactant intactId="EBI-747899">
        <id>Q8N302</id>
        <label>AGGF1</label>
    </interactant>
    <organismsDiffer>false</organismsDiffer>
    <experiments>3</experiments>
</comment>
<comment type="interaction">
    <interactant intactId="EBI-1237044">
        <id>O43143</id>
    </interactant>
    <interactant intactId="EBI-18121830">
        <id>Q9P1Y5-2</id>
        <label>CAMSAP3</label>
    </interactant>
    <organismsDiffer>false</organismsDiffer>
    <experiments>3</experiments>
</comment>
<comment type="interaction">
    <interactant intactId="EBI-1237044">
        <id>O43143</id>
    </interactant>
    <interactant intactId="EBI-11022345">
        <id>P51114-2</id>
        <label>FXR1</label>
    </interactant>
    <organismsDiffer>false</organismsDiffer>
    <experiments>3</experiments>
</comment>
<comment type="interaction">
    <interactant intactId="EBI-1237044">
        <id>O43143</id>
    </interactant>
    <interactant intactId="EBI-751540">
        <id>O95872</id>
        <label>GPANK1</label>
    </interactant>
    <organismsDiffer>false</organismsDiffer>
    <experiments>3</experiments>
</comment>
<comment type="interaction">
    <interactant intactId="EBI-1237044">
        <id>O43143</id>
    </interactant>
    <interactant intactId="EBI-2949715">
        <id>O95678</id>
        <label>KRT75</label>
    </interactant>
    <organismsDiffer>false</organismsDiffer>
    <experiments>3</experiments>
</comment>
<comment type="interaction">
    <interactant intactId="EBI-1237044">
        <id>O43143</id>
    </interactant>
    <interactant intactId="EBI-766011">
        <id>O15226</id>
        <label>NKRF</label>
    </interactant>
    <organismsDiffer>false</organismsDiffer>
    <experiments>4</experiments>
</comment>
<comment type="interaction">
    <interactant intactId="EBI-1237044">
        <id>O43143</id>
    </interactant>
    <interactant intactId="EBI-20724008">
        <id>Q96RS6-1</id>
        <label>NUDCD1</label>
    </interactant>
    <organismsDiffer>false</organismsDiffer>
    <experiments>2</experiments>
</comment>
<comment type="interaction">
    <interactant intactId="EBI-1237044">
        <id>O43143</id>
    </interactant>
    <interactant intactId="EBI-721525">
        <id>P98175</id>
        <label>RBM10</label>
    </interactant>
    <organismsDiffer>false</organismsDiffer>
    <experiments>3</experiments>
</comment>
<comment type="interaction">
    <interactant intactId="EBI-1237044">
        <id>O43143</id>
    </interactant>
    <interactant intactId="EBI-740272">
        <id>Q96I25</id>
        <label>RBM17</label>
    </interactant>
    <organismsDiffer>false</organismsDiffer>
    <experiments>12</experiments>
</comment>
<comment type="interaction">
    <interactant intactId="EBI-1237044">
        <id>O43143</id>
    </interactant>
    <interactant intactId="EBI-714003">
        <id>P52756</id>
        <label>RBM5</label>
    </interactant>
    <organismsDiffer>false</organismsDiffer>
    <experiments>15</experiments>
</comment>
<comment type="interaction">
    <interactant intactId="EBI-1237044">
        <id>O43143</id>
    </interactant>
    <interactant intactId="EBI-2462271">
        <id>Q15428</id>
        <label>SF3A2</label>
    </interactant>
    <organismsDiffer>false</organismsDiffer>
    <experiments>2</experiments>
</comment>
<comment type="interaction">
    <interactant intactId="EBI-1237044">
        <id>O43143</id>
    </interactant>
    <interactant intactId="EBI-2691671">
        <id>Q8IWZ8</id>
        <label>SUGP1</label>
    </interactant>
    <organismsDiffer>false</organismsDiffer>
    <experiments>2</experiments>
</comment>
<comment type="interaction">
    <interactant intactId="EBI-1237044">
        <id>O43143</id>
    </interactant>
    <interactant intactId="EBI-16428984">
        <id>A0A0S2Z6H0</id>
        <label>ZGPAT</label>
    </interactant>
    <organismsDiffer>false</organismsDiffer>
    <experiments>3</experiments>
</comment>
<comment type="interaction">
    <interactant intactId="EBI-1237044">
        <id>O43143</id>
    </interactant>
    <interactant intactId="EBI-3439227">
        <id>Q8N5A5</id>
        <label>ZGPAT</label>
    </interactant>
    <organismsDiffer>false</organismsDiffer>
    <experiments>6</experiments>
</comment>
<comment type="interaction">
    <interactant intactId="EBI-1237044">
        <id>O43143</id>
    </interactant>
    <interactant intactId="EBI-10183064">
        <id>Q8N5A5-2</id>
        <label>ZGPAT</label>
    </interactant>
    <organismsDiffer>false</organismsDiffer>
    <experiments>12</experiments>
</comment>
<comment type="interaction">
    <interactant intactId="EBI-1237044">
        <id>O43143</id>
    </interactant>
    <interactant intactId="EBI-16182226">
        <id>Q91WS2-1</id>
        <label>Nlrp6</label>
    </interactant>
    <organismsDiffer>true</organismsDiffer>
    <experiments>2</experiments>
</comment>
<comment type="subcellular location">
    <subcellularLocation>
        <location evidence="5">Nucleus</location>
    </subcellularLocation>
    <subcellularLocation>
        <location evidence="5">Nucleus</location>
        <location evidence="5">Nucleolus</location>
    </subcellularLocation>
</comment>
<comment type="tissue specificity">
    <text evidence="14">Ubiquitous.</text>
</comment>
<comment type="similarity">
    <text evidence="18">Belongs to the DEAD box helicase family. DEAH subfamily. DDX15/PRP43 sub-subfamily.</text>
</comment>
<proteinExistence type="evidence at protein level"/>
<organism>
    <name type="scientific">Homo sapiens</name>
    <name type="common">Human</name>
    <dbReference type="NCBI Taxonomy" id="9606"/>
    <lineage>
        <taxon>Eukaryota</taxon>
        <taxon>Metazoa</taxon>
        <taxon>Chordata</taxon>
        <taxon>Craniata</taxon>
        <taxon>Vertebrata</taxon>
        <taxon>Euteleostomi</taxon>
        <taxon>Mammalia</taxon>
        <taxon>Eutheria</taxon>
        <taxon>Euarchontoglires</taxon>
        <taxon>Primates</taxon>
        <taxon>Haplorrhini</taxon>
        <taxon>Catarrhini</taxon>
        <taxon>Hominidae</taxon>
        <taxon>Homo</taxon>
    </lineage>
</organism>
<sequence>MSKRHRLDLGEDYPSGKKRAGTDGKDRDRDRDREDRSKDRDRERDRGDREREREKEKEKELRASTNAMLISAGLPPLKASHSAHSTHSAHSTHSTHSAHSTHAGHAGHTSLPQCINPFTNLPHTPRYYDILKKRLQLPVWEYKDRFTDILVRHQSFVLVGETGSGKTTQIPQWCVEYMRSLPGPKRGVACTQPRRVAAMSVAQRVADEMDVMLGQEVGYSIRFEDCSSAKTILKYMTDGMLLREAMNDPLLERYGVIILDEAHERTLATDILMGVLKEVVRQRSDLKVIVMSATLDAGKFQIYFDNCPLLTIPGRTHPVEIFYTPEPERDYLEAAIRTVIQIHMCEEEEGDLLLFLTGQEEIDEACKRIKREVDDLGPEVGDIKIIPLYSTLPPQQQQRIFEPPPPKKQNGAIGRKVVVSTNIAETSLTIDGVVFVIDPGFAKQKVYNPRIRVESLLVTAISKASAQQRAGRAGRTRPGKCFRLYTEKAYKTEMQDNTYPEILRSNLGSVVLQLKKLGIDDLVHFDFMDPPAPETLMRALELLNYLAALNDDGDLTELGSMMAEFPLDPQLAKMVIASCDYNCSNEVLSITAMLSVPQCFVRPTEAKKAADEAKMRFAHIDGDHLTLLNVYHAFKQNHESVQWCYDNFINYRSLMSADNVRQQLSRIMDRFNLPRRSTDFTSRDYYINIRKALVTGYFMQVAHLERTGHYLTVKDNQVVQLHPSTVLDHKPEWVLYNEFVLTTKNYIRTCTDIKPEWLVKIAPQYYDMSNFPQCEAKRQLDRIIAKLQSKEYSQY</sequence>
<reference key="1">
    <citation type="journal article" date="1997" name="Biochem. Biophys. Res. Commun.">
        <title>Cloning and characterization of a putative human RNA helicase gene of the DEAH-box protein family.</title>
        <authorList>
            <person name="Imamura O."/>
            <person name="Sugawara M."/>
            <person name="Furuichi Y."/>
        </authorList>
    </citation>
    <scope>NUCLEOTIDE SEQUENCE [MRNA]</scope>
    <scope>TISSUE SPECIFICITY</scope>
</reference>
<reference key="2">
    <citation type="journal article" date="2002" name="RNA">
        <title>The human La (SS-B) autoantigen interacts with DDX15/hPrp43, a putative DEAH-box RNA helicase.</title>
        <authorList>
            <person name="Fouraux M.A."/>
            <person name="Kolkman M.J.M."/>
            <person name="Van der Heijden A."/>
            <person name="De Jong A.S."/>
            <person name="Van Venrooij W.J."/>
            <person name="Pruijn G.J.M."/>
        </authorList>
    </citation>
    <scope>NUCLEOTIDE SEQUENCE [MRNA]</scope>
    <scope>INTERACTION WITH SSB</scope>
    <scope>SUBCELLULAR LOCATION</scope>
    <source>
        <tissue>Placenta</tissue>
    </source>
</reference>
<reference key="3">
    <citation type="journal article" date="2004" name="Genome Res.">
        <title>The status, quality, and expansion of the NIH full-length cDNA project: the Mammalian Gene Collection (MGC).</title>
        <authorList>
            <consortium name="The MGC Project Team"/>
        </authorList>
    </citation>
    <scope>NUCLEOTIDE SEQUENCE [LARGE SCALE MRNA]</scope>
    <source>
        <tissue>Prostate</tissue>
    </source>
</reference>
<reference key="4">
    <citation type="journal article" date="2003" name="Nature">
        <title>Proteomic characterization of the human centrosome by protein correlation profiling.</title>
        <authorList>
            <person name="Andersen J.S."/>
            <person name="Wilkinson C.J."/>
            <person name="Mayor T."/>
            <person name="Mortensen P."/>
            <person name="Nigg E.A."/>
            <person name="Mann M."/>
        </authorList>
    </citation>
    <scope>IDENTIFICATION BY MASS SPECTROMETRY</scope>
    <source>
        <tissue>Lymphoblast</tissue>
    </source>
</reference>
<reference key="5">
    <citation type="journal article" date="2004" name="RNA">
        <title>The human 18S U11/U12 snRNP contains a set of novel proteins not found in the U2-dependent spliceosome.</title>
        <authorList>
            <person name="Will C.L."/>
            <person name="Schneider C."/>
            <person name="Hossbach M."/>
            <person name="Urlaub H."/>
            <person name="Rauhut R."/>
            <person name="Elbashir S."/>
            <person name="Tuschl T."/>
            <person name="Luehrmann R."/>
        </authorList>
    </citation>
    <scope>IDENTIFICATION IN A COMPLEX WITH THE U11/U12 SPLICEOSOME</scope>
    <scope>IDENTIFICATION BY MASS SPECTROMETRY</scope>
</reference>
<reference key="6">
    <citation type="journal article" date="2009" name="Cancer Sci.">
        <title>Involvement of G-patch domain containing 2 overexpression in breast carcinogenesis.</title>
        <authorList>
            <person name="Lin M.L."/>
            <person name="Fukukawa C."/>
            <person name="Park J.H."/>
            <person name="Naito K."/>
            <person name="Kijima K."/>
            <person name="Shimo A."/>
            <person name="Ajiro M."/>
            <person name="Nishidate T."/>
            <person name="Nakamura Y."/>
            <person name="Katagiri T."/>
        </authorList>
    </citation>
    <scope>CATALYTIC ACTIVITY</scope>
    <scope>INTERACTION WITH GPATCH2</scope>
</reference>
<reference key="7">
    <citation type="journal article" date="2009" name="Nucleic Acids Res.">
        <title>Isolation and characterization of post-splicing lariat-intron complexes.</title>
        <authorList>
            <person name="Yoshimoto R."/>
            <person name="Kataoka N."/>
            <person name="Okawa K."/>
            <person name="Ohno M."/>
        </authorList>
    </citation>
    <scope>FUNCTION</scope>
    <scope>IDENTIFICATION IN THE INTRON LARGE COMPLEX</scope>
    <scope>INTERACTION WITH TFIP11</scope>
</reference>
<reference key="8">
    <citation type="journal article" date="2009" name="Science">
        <title>Lysine acetylation targets protein complexes and co-regulates major cellular functions.</title>
        <authorList>
            <person name="Choudhary C."/>
            <person name="Kumar C."/>
            <person name="Gnad F."/>
            <person name="Nielsen M.L."/>
            <person name="Rehman M."/>
            <person name="Walther T.C."/>
            <person name="Olsen J.V."/>
            <person name="Mann M."/>
        </authorList>
    </citation>
    <scope>ACETYLATION [LARGE SCALE ANALYSIS] AT LYS-488</scope>
    <scope>IDENTIFICATION BY MASS SPECTROMETRY [LARGE SCALE ANALYSIS]</scope>
</reference>
<reference key="9">
    <citation type="journal article" date="2011" name="BMC Syst. Biol.">
        <title>Initial characterization of the human central proteome.</title>
        <authorList>
            <person name="Burkard T.R."/>
            <person name="Planyavsky M."/>
            <person name="Kaupe I."/>
            <person name="Breitwieser F.P."/>
            <person name="Buerckstuemmer T."/>
            <person name="Bennett K.L."/>
            <person name="Superti-Furga G."/>
            <person name="Colinge J."/>
        </authorList>
    </citation>
    <scope>IDENTIFICATION BY MASS SPECTROMETRY [LARGE SCALE ANALYSIS]</scope>
</reference>
<reference key="10">
    <citation type="journal article" date="2012" name="Mol. Cell. Proteomics">
        <title>Systematic analysis of protein pools, isoforms, and modifications affecting turnover and subcellular localization.</title>
        <authorList>
            <person name="Ahmad Y."/>
            <person name="Boisvert F.M."/>
            <person name="Lundberg E."/>
            <person name="Uhlen M."/>
            <person name="Lamond A.I."/>
        </authorList>
    </citation>
    <scope>SUBCELLULAR LOCATION [LARGE SCALE ANALYSIS]</scope>
</reference>
<reference key="11">
    <citation type="journal article" date="2013" name="J. Proteome Res.">
        <title>Toward a comprehensive characterization of a human cancer cell phosphoproteome.</title>
        <authorList>
            <person name="Zhou H."/>
            <person name="Di Palma S."/>
            <person name="Preisinger C."/>
            <person name="Peng M."/>
            <person name="Polat A.N."/>
            <person name="Heck A.J."/>
            <person name="Mohammed S."/>
        </authorList>
    </citation>
    <scope>PHOSPHORYLATION [LARGE SCALE ANALYSIS] AT SER-15</scope>
    <scope>IDENTIFICATION BY MASS SPECTROMETRY [LARGE SCALE ANALYSIS]</scope>
    <source>
        <tissue>Cervix carcinoma</tissue>
        <tissue>Erythroleukemia</tissue>
    </source>
</reference>
<reference key="12">
    <citation type="journal article" date="2014" name="J. Immunol.">
        <title>DHX15 senses double-stranded RNA in myeloid dendritic cells.</title>
        <authorList>
            <person name="Lu H."/>
            <person name="Lu N."/>
            <person name="Weng L."/>
            <person name="Yuan B."/>
            <person name="Liu Y.J."/>
            <person name="Zhang Z."/>
        </authorList>
    </citation>
    <scope>FUNCTION</scope>
    <scope>RNA-BINDING</scope>
    <scope>INTERACTION WITH MAVS</scope>
    <scope>MUTAGENESIS OF LYS-166; THR-167; ASP-260 AND GLU-261</scope>
</reference>
<reference key="13">
    <citation type="journal article" date="2014" name="J. Proteomics">
        <title>An enzyme assisted RP-RPLC approach for in-depth analysis of human liver phosphoproteome.</title>
        <authorList>
            <person name="Bian Y."/>
            <person name="Song C."/>
            <person name="Cheng K."/>
            <person name="Dong M."/>
            <person name="Wang F."/>
            <person name="Huang J."/>
            <person name="Sun D."/>
            <person name="Wang L."/>
            <person name="Ye M."/>
            <person name="Zou H."/>
        </authorList>
    </citation>
    <scope>IDENTIFICATION BY MASS SPECTROMETRY [LARGE SCALE ANALYSIS]</scope>
    <source>
        <tissue>Liver</tissue>
    </source>
</reference>
<reference key="14">
    <citation type="journal article" date="2014" name="Sci. Signal.">
        <title>The DEAH-box RNA helicase DHX15 activates NF-kappaB and MAPK signaling downstream of MAVS during antiviral responses.</title>
        <authorList>
            <person name="Mosallanejad K."/>
            <person name="Sekine Y."/>
            <person name="Ishikura-Kinoshita S."/>
            <person name="Kumagai K."/>
            <person name="Nagano T."/>
            <person name="Matsuzawa A."/>
            <person name="Takeda K."/>
            <person name="Naguro I."/>
            <person name="Ichijo H."/>
        </authorList>
    </citation>
    <scope>FUNCTION</scope>
    <scope>MUTAGENESIS OF LYS-166; THR-167; ASP-260 AND GLU-261</scope>
</reference>
<reference key="15">
    <citation type="journal article" date="2017" name="Nat. Struct. Mol. Biol.">
        <title>Site-specific mapping of the human SUMO proteome reveals co-modification with phosphorylation.</title>
        <authorList>
            <person name="Hendriks I.A."/>
            <person name="Lyon D."/>
            <person name="Young C."/>
            <person name="Jensen L.J."/>
            <person name="Vertegaal A.C."/>
            <person name="Nielsen M.L."/>
        </authorList>
    </citation>
    <scope>SUMOYLATION [LARGE SCALE ANALYSIS] AT LYS-786</scope>
    <scope>IDENTIFICATION BY MASS SPECTROMETRY [LARGE SCALE ANALYSIS]</scope>
</reference>
<reference key="16">
    <citation type="journal article" date="2021" name="Cell Rep.">
        <title>DHX15 is required to control RNA virus-induced intestinal inflammation.</title>
        <authorList>
            <person name="Xing J."/>
            <person name="Zhou X."/>
            <person name="Fang M."/>
            <person name="Zhang E."/>
            <person name="Minze L.J."/>
            <person name="Zhang Z."/>
        </authorList>
    </citation>
    <scope>FUNCTION</scope>
    <scope>INTERACTION WITH NLRP6</scope>
</reference>
<reference evidence="20" key="17">
    <citation type="journal article" date="2017" name="Acta Crystallogr. F Struct. Biol. Commun.">
        <title>The crystal structure of human DEAH-box RNA helicase 15 reveals a domain organization of the mammalian DEAH/RHA family.</title>
        <authorList>
            <person name="Murakami K."/>
            <person name="Nakano K."/>
            <person name="Shimizu T."/>
            <person name="Ohto U."/>
        </authorList>
    </citation>
    <scope>X-RAY CRYSTALLOGRAPHY (2.00 ANGSTROMS) OF 110-795</scope>
</reference>
<reference evidence="21" key="18">
    <citation type="journal article" date="2019" name="Cell Res.">
        <title>Structures of the human spliceosomes before and after release of the ligated exon.</title>
        <authorList>
            <person name="Zhang X."/>
            <person name="Zhan X."/>
            <person name="Yan C."/>
            <person name="Zhang W."/>
            <person name="Liu D."/>
            <person name="Lei J."/>
            <person name="Shi Y."/>
        </authorList>
    </citation>
    <scope>STRUCTURE BY ELECTRON MICROSCOPY (2.86 ANGSTROMS) OF MUTANT ALA-429 IN COMPLEX WITH THE INTRON LARGE COMPLEX</scope>
    <scope>IDENTIFICATION IN THE INTRON LARGE COMPLEX</scope>
    <scope>MUTAGENESIS OF THR-429</scope>
</reference>
<reference evidence="22 23" key="19">
    <citation type="journal article" date="2020" name="Proc. Natl. Acad. Sci. U.S.A.">
        <title>Structural basis for DEAH-helicase activation by G-patch proteins.</title>
        <authorList>
            <person name="Studer M.K."/>
            <person name="Ivanovic L."/>
            <person name="Weber M.E."/>
            <person name="Marti S."/>
            <person name="Jonas S."/>
        </authorList>
    </citation>
    <scope>X-RAY CRYSTALLOGRAPHY (1.85 ANGSTROMS) OF 113-795 IN COMPLEX WITH NKRF</scope>
    <scope>FUNCTION</scope>
    <scope>CATALYTIC ACTIVITY</scope>
    <scope>ACTIVITY REGULATION</scope>
    <scope>INTERACTION WITH NKRF</scope>
    <scope>MUTAGENESIS OF PRO-327; TYR-485; ALA-489; VAL-523; PRO-533; LEU-536 AND LEU-540</scope>
</reference>
<protein>
    <recommendedName>
        <fullName evidence="18">ATP-dependent RNA helicase DHX15</fullName>
        <ecNumber evidence="8 12">3.6.4.13</ecNumber>
    </recommendedName>
    <alternativeName>
        <fullName>ATP-dependent RNA helicase #46</fullName>
    </alternativeName>
    <alternativeName>
        <fullName>DEAH box protein 15</fullName>
    </alternativeName>
    <alternativeName>
        <fullName evidence="15">Splicing factor Prp43</fullName>
        <shortName evidence="15">hPrp43</shortName>
    </alternativeName>
</protein>
<keyword id="KW-0002">3D-structure</keyword>
<keyword id="KW-0007">Acetylation</keyword>
<keyword id="KW-0067">ATP-binding</keyword>
<keyword id="KW-0347">Helicase</keyword>
<keyword id="KW-0378">Hydrolase</keyword>
<keyword id="KW-0391">Immunity</keyword>
<keyword id="KW-0399">Innate immunity</keyword>
<keyword id="KW-1017">Isopeptide bond</keyword>
<keyword id="KW-0507">mRNA processing</keyword>
<keyword id="KW-0508">mRNA splicing</keyword>
<keyword id="KW-0547">Nucleotide-binding</keyword>
<keyword id="KW-0539">Nucleus</keyword>
<keyword id="KW-0597">Phosphoprotein</keyword>
<keyword id="KW-1267">Proteomics identification</keyword>
<keyword id="KW-1185">Reference proteome</keyword>
<keyword id="KW-0694">RNA-binding</keyword>
<keyword id="KW-0832">Ubl conjugation</keyword>
<feature type="chain" id="PRO_0000055139" description="ATP-dependent RNA helicase DHX15">
    <location>
        <begin position="1"/>
        <end position="795"/>
    </location>
</feature>
<feature type="domain" description="Helicase ATP-binding" evidence="2">
    <location>
        <begin position="147"/>
        <end position="313"/>
    </location>
</feature>
<feature type="domain" description="Helicase C-terminal" evidence="3">
    <location>
        <begin position="338"/>
        <end position="518"/>
    </location>
</feature>
<feature type="region of interest" description="Disordered" evidence="4">
    <location>
        <begin position="1"/>
        <end position="108"/>
    </location>
</feature>
<feature type="short sequence motif" description="DEAH box">
    <location>
        <begin position="260"/>
        <end position="263"/>
    </location>
</feature>
<feature type="compositionally biased region" description="Basic and acidic residues" evidence="4">
    <location>
        <begin position="20"/>
        <end position="62"/>
    </location>
</feature>
<feature type="compositionally biased region" description="Low complexity" evidence="4">
    <location>
        <begin position="79"/>
        <end position="108"/>
    </location>
</feature>
<feature type="binding site" evidence="2">
    <location>
        <begin position="160"/>
        <end position="167"/>
    </location>
    <ligand>
        <name>ATP</name>
        <dbReference type="ChEBI" id="CHEBI:30616"/>
    </ligand>
</feature>
<feature type="modified residue" description="Phosphoserine" evidence="25">
    <location>
        <position position="15"/>
    </location>
</feature>
<feature type="modified residue" description="N6-acetyllysine" evidence="24">
    <location>
        <position position="488"/>
    </location>
</feature>
<feature type="cross-link" description="Glycyl lysine isopeptide (Lys-Gly) (interchain with G-Cter in SUMO2)" evidence="26">
    <location>
        <position position="786"/>
    </location>
</feature>
<feature type="mutagenesis site" description="Abolished ATPase activity without affecting ability to activate the MAVS-dependent signaling to produce interferon-beta." evidence="9 10">
    <original>K</original>
    <variation>A</variation>
    <location>
        <position position="166"/>
    </location>
</feature>
<feature type="mutagenesis site" description="Abolished ATPase activity without affecting ability to activate the MAVS-dependent signaling to produce interferon-beta." evidence="9 10">
    <original>T</original>
    <variation>A</variation>
    <location>
        <position position="167"/>
    </location>
</feature>
<feature type="mutagenesis site" description="Abolished ATPase activity without affecting ability to activate the MAVS-dependent signaling to produce interferon-beta." evidence="9 10">
    <original>D</original>
    <variation>A</variation>
    <location>
        <position position="260"/>
    </location>
</feature>
<feature type="mutagenesis site" description="Abolished ATPase activity without affecting ability to activate the MAVS-dependent signaling to produce interferon-beta." evidence="9 10">
    <original>E</original>
    <variation>A</variation>
    <location>
        <position position="261"/>
    </location>
</feature>
<feature type="mutagenesis site" description="Abolished interaction with NKRF." evidence="12">
    <original>P</original>
    <variation>E</variation>
    <location>
        <position position="327"/>
    </location>
</feature>
<feature type="mutagenesis site" description="Abolished ATPase activity." evidence="11">
    <original>T</original>
    <variation>A</variation>
    <location>
        <position position="429"/>
    </location>
</feature>
<feature type="mutagenesis site" description="Abolished interaction with NKRF." evidence="12">
    <original>Y</original>
    <variation>E</variation>
    <location>
        <position position="485"/>
    </location>
</feature>
<feature type="mutagenesis site" description="Decreased, but not abolished interaction, with NKRF." evidence="12">
    <original>A</original>
    <variation>E</variation>
    <location>
        <position position="489"/>
    </location>
</feature>
<feature type="mutagenesis site" description="Abolished interaction with NKRF." evidence="12">
    <original>V</original>
    <variation>E</variation>
    <location>
        <position position="523"/>
    </location>
</feature>
<feature type="mutagenesis site" description="Abolished interaction with NKRF." evidence="12">
    <original>P</original>
    <variation>E</variation>
    <location>
        <position position="533"/>
    </location>
</feature>
<feature type="mutagenesis site" description="Abolished interaction with NKRF." evidence="12">
    <original>L</original>
    <variation>E</variation>
    <location>
        <position position="536"/>
    </location>
</feature>
<feature type="mutagenesis site" description="Abolished interaction with NKRF." evidence="12">
    <original>L</original>
    <variation>E</variation>
    <location>
        <position position="540"/>
    </location>
</feature>
<feature type="sequence conflict" description="In Ref. 1; BAA23987." evidence="18" ref="1">
    <original>V</original>
    <variation>G</variation>
    <location>
        <position position="151"/>
    </location>
</feature>
<feature type="sequence conflict" description="In Ref. 1; BAA23987." evidence="18" ref="1">
    <original>QW</original>
    <variation>HR</variation>
    <location>
        <begin position="172"/>
        <end position="173"/>
    </location>
</feature>
<feature type="sequence conflict" description="In Ref. 1; BAA23987." evidence="18" ref="1">
    <original>ILK</original>
    <variation>FFM</variation>
    <location>
        <begin position="232"/>
        <end position="234"/>
    </location>
</feature>
<feature type="sequence conflict" description="In Ref. 1; BAA23987." evidence="18" ref="1">
    <original>KLQSKEYSQY</original>
    <variation>QTSIQGIFTVLNSVLRTEVIERTALKDE</variation>
    <location>
        <begin position="786"/>
        <end position="795"/>
    </location>
</feature>
<feature type="strand" evidence="28">
    <location>
        <begin position="114"/>
        <end position="116"/>
    </location>
</feature>
<feature type="turn" evidence="29">
    <location>
        <begin position="117"/>
        <end position="119"/>
    </location>
</feature>
<feature type="strand" evidence="29">
    <location>
        <begin position="120"/>
        <end position="122"/>
    </location>
</feature>
<feature type="helix" evidence="29">
    <location>
        <begin position="125"/>
        <end position="134"/>
    </location>
</feature>
<feature type="helix" evidence="29">
    <location>
        <begin position="138"/>
        <end position="142"/>
    </location>
</feature>
<feature type="helix" evidence="29">
    <location>
        <begin position="143"/>
        <end position="150"/>
    </location>
</feature>
<feature type="strand" evidence="29">
    <location>
        <begin position="154"/>
        <end position="159"/>
    </location>
</feature>
<feature type="helix" evidence="29">
    <location>
        <begin position="166"/>
        <end position="179"/>
    </location>
</feature>
<feature type="strand" evidence="29">
    <location>
        <begin position="181"/>
        <end position="184"/>
    </location>
</feature>
<feature type="strand" evidence="29">
    <location>
        <begin position="187"/>
        <end position="193"/>
    </location>
</feature>
<feature type="helix" evidence="29">
    <location>
        <begin position="195"/>
        <end position="208"/>
    </location>
</feature>
<feature type="turn" evidence="29">
    <location>
        <begin position="214"/>
        <end position="216"/>
    </location>
</feature>
<feature type="strand" evidence="29">
    <location>
        <begin position="217"/>
        <end position="221"/>
    </location>
</feature>
<feature type="strand" evidence="29">
    <location>
        <begin position="224"/>
        <end position="226"/>
    </location>
</feature>
<feature type="strand" evidence="29">
    <location>
        <begin position="232"/>
        <end position="237"/>
    </location>
</feature>
<feature type="helix" evidence="29">
    <location>
        <begin position="238"/>
        <end position="247"/>
    </location>
</feature>
<feature type="strand" evidence="29">
    <location>
        <begin position="254"/>
        <end position="259"/>
    </location>
</feature>
<feature type="helix" evidence="29">
    <location>
        <begin position="262"/>
        <end position="264"/>
    </location>
</feature>
<feature type="helix" evidence="29">
    <location>
        <begin position="267"/>
        <end position="282"/>
    </location>
</feature>
<feature type="strand" evidence="29">
    <location>
        <begin position="287"/>
        <end position="294"/>
    </location>
</feature>
<feature type="helix" evidence="29">
    <location>
        <begin position="296"/>
        <end position="298"/>
    </location>
</feature>
<feature type="helix" evidence="29">
    <location>
        <begin position="299"/>
        <end position="303"/>
    </location>
</feature>
<feature type="strand" evidence="29">
    <location>
        <begin position="309"/>
        <end position="311"/>
    </location>
</feature>
<feature type="strand" evidence="29">
    <location>
        <begin position="319"/>
        <end position="322"/>
    </location>
</feature>
<feature type="helix" evidence="29">
    <location>
        <begin position="331"/>
        <end position="345"/>
    </location>
</feature>
<feature type="strand" evidence="29">
    <location>
        <begin position="351"/>
        <end position="355"/>
    </location>
</feature>
<feature type="helix" evidence="29">
    <location>
        <begin position="359"/>
        <end position="375"/>
    </location>
</feature>
<feature type="strand" evidence="28">
    <location>
        <begin position="378"/>
        <end position="380"/>
    </location>
</feature>
<feature type="strand" evidence="29">
    <location>
        <begin position="383"/>
        <end position="388"/>
    </location>
</feature>
<feature type="helix" evidence="29">
    <location>
        <begin position="394"/>
        <end position="397"/>
    </location>
</feature>
<feature type="helix" evidence="29">
    <location>
        <begin position="398"/>
        <end position="401"/>
    </location>
</feature>
<feature type="strand" evidence="27">
    <location>
        <begin position="409"/>
        <end position="412"/>
    </location>
</feature>
<feature type="strand" evidence="29">
    <location>
        <begin position="415"/>
        <end position="420"/>
    </location>
</feature>
<feature type="helix" evidence="29">
    <location>
        <begin position="423"/>
        <end position="426"/>
    </location>
</feature>
<feature type="strand" evidence="29">
    <location>
        <begin position="433"/>
        <end position="438"/>
    </location>
</feature>
<feature type="strand" evidence="29">
    <location>
        <begin position="440"/>
        <end position="448"/>
    </location>
</feature>
<feature type="turn" evidence="29">
    <location>
        <begin position="449"/>
        <end position="452"/>
    </location>
</feature>
<feature type="strand" evidence="29">
    <location>
        <begin position="453"/>
        <end position="460"/>
    </location>
</feature>
<feature type="helix" evidence="29">
    <location>
        <begin position="463"/>
        <end position="471"/>
    </location>
</feature>
<feature type="helix" evidence="29">
    <location>
        <begin position="472"/>
        <end position="474"/>
    </location>
</feature>
<feature type="strand" evidence="29">
    <location>
        <begin position="475"/>
        <end position="477"/>
    </location>
</feature>
<feature type="strand" evidence="29">
    <location>
        <begin position="479"/>
        <end position="485"/>
    </location>
</feature>
<feature type="helix" evidence="29">
    <location>
        <begin position="487"/>
        <end position="492"/>
    </location>
</feature>
<feature type="helix" evidence="29">
    <location>
        <begin position="501"/>
        <end position="504"/>
    </location>
</feature>
<feature type="helix" evidence="29">
    <location>
        <begin position="508"/>
        <end position="516"/>
    </location>
</feature>
<feature type="turn" evidence="28">
    <location>
        <begin position="522"/>
        <end position="524"/>
    </location>
</feature>
<feature type="helix" evidence="29">
    <location>
        <begin position="533"/>
        <end position="545"/>
    </location>
</feature>
<feature type="helix" evidence="29">
    <location>
        <begin position="557"/>
        <end position="563"/>
    </location>
</feature>
<feature type="strand" evidence="29">
    <location>
        <begin position="565"/>
        <end position="567"/>
    </location>
</feature>
<feature type="helix" evidence="29">
    <location>
        <begin position="569"/>
        <end position="578"/>
    </location>
</feature>
<feature type="helix" evidence="29">
    <location>
        <begin position="579"/>
        <end position="581"/>
    </location>
</feature>
<feature type="helix" evidence="29">
    <location>
        <begin position="584"/>
        <end position="594"/>
    </location>
</feature>
<feature type="helix" evidence="27">
    <location>
        <begin position="604"/>
        <end position="606"/>
    </location>
</feature>
<feature type="helix" evidence="29">
    <location>
        <begin position="607"/>
        <end position="615"/>
    </location>
</feature>
<feature type="helix" evidence="29">
    <location>
        <begin position="623"/>
        <end position="636"/>
    </location>
</feature>
<feature type="turn" evidence="29">
    <location>
        <begin position="637"/>
        <end position="639"/>
    </location>
</feature>
<feature type="helix" evidence="29">
    <location>
        <begin position="641"/>
        <end position="646"/>
    </location>
</feature>
<feature type="helix" evidence="29">
    <location>
        <begin position="651"/>
        <end position="670"/>
    </location>
</feature>
<feature type="helix" evidence="29">
    <location>
        <begin position="684"/>
        <end position="697"/>
    </location>
</feature>
<feature type="strand" evidence="29">
    <location>
        <begin position="700"/>
        <end position="704"/>
    </location>
</feature>
<feature type="strand" evidence="29">
    <location>
        <begin position="710"/>
        <end position="712"/>
    </location>
</feature>
<feature type="turn" evidence="29">
    <location>
        <begin position="713"/>
        <end position="715"/>
    </location>
</feature>
<feature type="strand" evidence="29">
    <location>
        <begin position="718"/>
        <end position="721"/>
    </location>
</feature>
<feature type="strand" evidence="29">
    <location>
        <begin position="732"/>
        <end position="752"/>
    </location>
</feature>
<feature type="helix" evidence="29">
    <location>
        <begin position="755"/>
        <end position="761"/>
    </location>
</feature>
<feature type="turn" evidence="29">
    <location>
        <begin position="763"/>
        <end position="765"/>
    </location>
</feature>
<feature type="turn" evidence="29">
    <location>
        <begin position="768"/>
        <end position="770"/>
    </location>
</feature>
<feature type="helix" evidence="29">
    <location>
        <begin position="775"/>
        <end position="788"/>
    </location>
</feature>
<name>DHX15_HUMAN</name>
<gene>
    <name evidence="16 19" type="primary">DHX15</name>
    <name evidence="17" type="synonym">DBP1</name>
    <name type="synonym">DDX15</name>
</gene>